<keyword id="KW-0597">Phosphoprotein</keyword>
<keyword id="KW-1185">Reference proteome</keyword>
<keyword id="KW-0677">Repeat</keyword>
<keyword id="KW-0802">TPR repeat</keyword>
<evidence type="ECO:0000250" key="1">
    <source>
        <dbReference type="UniProtKB" id="Q99614"/>
    </source>
</evidence>
<evidence type="ECO:0000256" key="2">
    <source>
        <dbReference type="SAM" id="MobiDB-lite"/>
    </source>
</evidence>
<sequence length="292" mass="33263">MEEKSEDCKVPEDLFNGLKVADPQEGESASPMVSDPKGQHCQSKLPKAAEAHPQDDHVEEECFHDCSASFEEEQPGAHVAGSKASDDSSSELDEEYLIELEKNMPEEEKQKRREESAKLKEEGNERFKRGDYMEAESSYSQALQMCPACFQKDRSVLFSNRAAARMKQDKKETAITDCSKAIQLNPTYIRAILRRAELYEKTDKLDEALEDYKSVLEKDPSVHQAREACMRLPKQIEERNERLKEEMLGKLKDLGNLVLRPFGLSTENFQIKQDSSTGSYSINFVQNPNNNR</sequence>
<gene>
    <name type="primary">Ttc1</name>
</gene>
<name>TTC1_MOUSE</name>
<accession>Q91Z38</accession>
<accession>Q3TLM0</accession>
<comment type="subunit">
    <text evidence="1">Interacts with the GAP domain of NF1. Interacts (via TPR repeats) with HSP90AA1 and HSPA8.</text>
</comment>
<protein>
    <recommendedName>
        <fullName>Tetratricopeptide repeat protein 1</fullName>
        <shortName>TPR repeat protein 1</shortName>
    </recommendedName>
</protein>
<organism>
    <name type="scientific">Mus musculus</name>
    <name type="common">Mouse</name>
    <dbReference type="NCBI Taxonomy" id="10090"/>
    <lineage>
        <taxon>Eukaryota</taxon>
        <taxon>Metazoa</taxon>
        <taxon>Chordata</taxon>
        <taxon>Craniata</taxon>
        <taxon>Vertebrata</taxon>
        <taxon>Euteleostomi</taxon>
        <taxon>Mammalia</taxon>
        <taxon>Eutheria</taxon>
        <taxon>Euarchontoglires</taxon>
        <taxon>Glires</taxon>
        <taxon>Rodentia</taxon>
        <taxon>Myomorpha</taxon>
        <taxon>Muroidea</taxon>
        <taxon>Muridae</taxon>
        <taxon>Murinae</taxon>
        <taxon>Mus</taxon>
        <taxon>Mus</taxon>
    </lineage>
</organism>
<reference key="1">
    <citation type="journal article" date="2005" name="Science">
        <title>The transcriptional landscape of the mammalian genome.</title>
        <authorList>
            <person name="Carninci P."/>
            <person name="Kasukawa T."/>
            <person name="Katayama S."/>
            <person name="Gough J."/>
            <person name="Frith M.C."/>
            <person name="Maeda N."/>
            <person name="Oyama R."/>
            <person name="Ravasi T."/>
            <person name="Lenhard B."/>
            <person name="Wells C."/>
            <person name="Kodzius R."/>
            <person name="Shimokawa K."/>
            <person name="Bajic V.B."/>
            <person name="Brenner S.E."/>
            <person name="Batalov S."/>
            <person name="Forrest A.R."/>
            <person name="Zavolan M."/>
            <person name="Davis M.J."/>
            <person name="Wilming L.G."/>
            <person name="Aidinis V."/>
            <person name="Allen J.E."/>
            <person name="Ambesi-Impiombato A."/>
            <person name="Apweiler R."/>
            <person name="Aturaliya R.N."/>
            <person name="Bailey T.L."/>
            <person name="Bansal M."/>
            <person name="Baxter L."/>
            <person name="Beisel K.W."/>
            <person name="Bersano T."/>
            <person name="Bono H."/>
            <person name="Chalk A.M."/>
            <person name="Chiu K.P."/>
            <person name="Choudhary V."/>
            <person name="Christoffels A."/>
            <person name="Clutterbuck D.R."/>
            <person name="Crowe M.L."/>
            <person name="Dalla E."/>
            <person name="Dalrymple B.P."/>
            <person name="de Bono B."/>
            <person name="Della Gatta G."/>
            <person name="di Bernardo D."/>
            <person name="Down T."/>
            <person name="Engstrom P."/>
            <person name="Fagiolini M."/>
            <person name="Faulkner G."/>
            <person name="Fletcher C.F."/>
            <person name="Fukushima T."/>
            <person name="Furuno M."/>
            <person name="Futaki S."/>
            <person name="Gariboldi M."/>
            <person name="Georgii-Hemming P."/>
            <person name="Gingeras T.R."/>
            <person name="Gojobori T."/>
            <person name="Green R.E."/>
            <person name="Gustincich S."/>
            <person name="Harbers M."/>
            <person name="Hayashi Y."/>
            <person name="Hensch T.K."/>
            <person name="Hirokawa N."/>
            <person name="Hill D."/>
            <person name="Huminiecki L."/>
            <person name="Iacono M."/>
            <person name="Ikeo K."/>
            <person name="Iwama A."/>
            <person name="Ishikawa T."/>
            <person name="Jakt M."/>
            <person name="Kanapin A."/>
            <person name="Katoh M."/>
            <person name="Kawasawa Y."/>
            <person name="Kelso J."/>
            <person name="Kitamura H."/>
            <person name="Kitano H."/>
            <person name="Kollias G."/>
            <person name="Krishnan S.P."/>
            <person name="Kruger A."/>
            <person name="Kummerfeld S.K."/>
            <person name="Kurochkin I.V."/>
            <person name="Lareau L.F."/>
            <person name="Lazarevic D."/>
            <person name="Lipovich L."/>
            <person name="Liu J."/>
            <person name="Liuni S."/>
            <person name="McWilliam S."/>
            <person name="Madan Babu M."/>
            <person name="Madera M."/>
            <person name="Marchionni L."/>
            <person name="Matsuda H."/>
            <person name="Matsuzawa S."/>
            <person name="Miki H."/>
            <person name="Mignone F."/>
            <person name="Miyake S."/>
            <person name="Morris K."/>
            <person name="Mottagui-Tabar S."/>
            <person name="Mulder N."/>
            <person name="Nakano N."/>
            <person name="Nakauchi H."/>
            <person name="Ng P."/>
            <person name="Nilsson R."/>
            <person name="Nishiguchi S."/>
            <person name="Nishikawa S."/>
            <person name="Nori F."/>
            <person name="Ohara O."/>
            <person name="Okazaki Y."/>
            <person name="Orlando V."/>
            <person name="Pang K.C."/>
            <person name="Pavan W.J."/>
            <person name="Pavesi G."/>
            <person name="Pesole G."/>
            <person name="Petrovsky N."/>
            <person name="Piazza S."/>
            <person name="Reed J."/>
            <person name="Reid J.F."/>
            <person name="Ring B.Z."/>
            <person name="Ringwald M."/>
            <person name="Rost B."/>
            <person name="Ruan Y."/>
            <person name="Salzberg S.L."/>
            <person name="Sandelin A."/>
            <person name="Schneider C."/>
            <person name="Schoenbach C."/>
            <person name="Sekiguchi K."/>
            <person name="Semple C.A."/>
            <person name="Seno S."/>
            <person name="Sessa L."/>
            <person name="Sheng Y."/>
            <person name="Shibata Y."/>
            <person name="Shimada H."/>
            <person name="Shimada K."/>
            <person name="Silva D."/>
            <person name="Sinclair B."/>
            <person name="Sperling S."/>
            <person name="Stupka E."/>
            <person name="Sugiura K."/>
            <person name="Sultana R."/>
            <person name="Takenaka Y."/>
            <person name="Taki K."/>
            <person name="Tammoja K."/>
            <person name="Tan S.L."/>
            <person name="Tang S."/>
            <person name="Taylor M.S."/>
            <person name="Tegner J."/>
            <person name="Teichmann S.A."/>
            <person name="Ueda H.R."/>
            <person name="van Nimwegen E."/>
            <person name="Verardo R."/>
            <person name="Wei C.L."/>
            <person name="Yagi K."/>
            <person name="Yamanishi H."/>
            <person name="Zabarovsky E."/>
            <person name="Zhu S."/>
            <person name="Zimmer A."/>
            <person name="Hide W."/>
            <person name="Bult C."/>
            <person name="Grimmond S.M."/>
            <person name="Teasdale R.D."/>
            <person name="Liu E.T."/>
            <person name="Brusic V."/>
            <person name="Quackenbush J."/>
            <person name="Wahlestedt C."/>
            <person name="Mattick J.S."/>
            <person name="Hume D.A."/>
            <person name="Kai C."/>
            <person name="Sasaki D."/>
            <person name="Tomaru Y."/>
            <person name="Fukuda S."/>
            <person name="Kanamori-Katayama M."/>
            <person name="Suzuki M."/>
            <person name="Aoki J."/>
            <person name="Arakawa T."/>
            <person name="Iida J."/>
            <person name="Imamura K."/>
            <person name="Itoh M."/>
            <person name="Kato T."/>
            <person name="Kawaji H."/>
            <person name="Kawagashira N."/>
            <person name="Kawashima T."/>
            <person name="Kojima M."/>
            <person name="Kondo S."/>
            <person name="Konno H."/>
            <person name="Nakano K."/>
            <person name="Ninomiya N."/>
            <person name="Nishio T."/>
            <person name="Okada M."/>
            <person name="Plessy C."/>
            <person name="Shibata K."/>
            <person name="Shiraki T."/>
            <person name="Suzuki S."/>
            <person name="Tagami M."/>
            <person name="Waki K."/>
            <person name="Watahiki A."/>
            <person name="Okamura-Oho Y."/>
            <person name="Suzuki H."/>
            <person name="Kawai J."/>
            <person name="Hayashizaki Y."/>
        </authorList>
    </citation>
    <scope>NUCLEOTIDE SEQUENCE [LARGE SCALE MRNA]</scope>
    <source>
        <strain>C57BL/6J</strain>
        <tissue>Mammary gland</tissue>
    </source>
</reference>
<reference key="2">
    <citation type="journal article" date="2004" name="Genome Res.">
        <title>The status, quality, and expansion of the NIH full-length cDNA project: the Mammalian Gene Collection (MGC).</title>
        <authorList>
            <consortium name="The MGC Project Team"/>
        </authorList>
    </citation>
    <scope>NUCLEOTIDE SEQUENCE [LARGE SCALE MRNA]</scope>
    <source>
        <strain>FVB/N</strain>
        <tissue>Mammary tumor</tissue>
    </source>
</reference>
<reference key="3">
    <citation type="journal article" date="2010" name="Cell">
        <title>A tissue-specific atlas of mouse protein phosphorylation and expression.</title>
        <authorList>
            <person name="Huttlin E.L."/>
            <person name="Jedrychowski M.P."/>
            <person name="Elias J.E."/>
            <person name="Goswami T."/>
            <person name="Rad R."/>
            <person name="Beausoleil S.A."/>
            <person name="Villen J."/>
            <person name="Haas W."/>
            <person name="Sowa M.E."/>
            <person name="Gygi S.P."/>
        </authorList>
    </citation>
    <scope>IDENTIFICATION BY MASS SPECTROMETRY [LARGE SCALE ANALYSIS]</scope>
    <source>
        <tissue>Brain</tissue>
        <tissue>Brown adipose tissue</tissue>
        <tissue>Heart</tissue>
        <tissue>Kidney</tissue>
        <tissue>Liver</tissue>
        <tissue>Lung</tissue>
        <tissue>Pancreas</tissue>
        <tissue>Spleen</tissue>
        <tissue>Testis</tissue>
    </source>
</reference>
<feature type="chain" id="PRO_0000106377" description="Tetratricopeptide repeat protein 1">
    <location>
        <begin position="1"/>
        <end position="292"/>
    </location>
</feature>
<feature type="repeat" description="TPR 1">
    <location>
        <begin position="116"/>
        <end position="149"/>
    </location>
</feature>
<feature type="repeat" description="TPR 2">
    <location>
        <begin position="155"/>
        <end position="188"/>
    </location>
</feature>
<feature type="repeat" description="TPR 3">
    <location>
        <begin position="189"/>
        <end position="222"/>
    </location>
</feature>
<feature type="region of interest" description="Disordered" evidence="2">
    <location>
        <begin position="1"/>
        <end position="125"/>
    </location>
</feature>
<feature type="compositionally biased region" description="Basic and acidic residues" evidence="2">
    <location>
        <begin position="1"/>
        <end position="12"/>
    </location>
</feature>
<feature type="compositionally biased region" description="Basic and acidic residues" evidence="2">
    <location>
        <begin position="47"/>
        <end position="64"/>
    </location>
</feature>
<feature type="compositionally biased region" description="Acidic residues" evidence="2">
    <location>
        <begin position="88"/>
        <end position="98"/>
    </location>
</feature>
<feature type="compositionally biased region" description="Basic and acidic residues" evidence="2">
    <location>
        <begin position="99"/>
        <end position="125"/>
    </location>
</feature>
<feature type="modified residue" description="Phosphoserine" evidence="1">
    <location>
        <position position="90"/>
    </location>
</feature>
<proteinExistence type="evidence at protein level"/>
<dbReference type="EMBL" id="AK077715">
    <property type="protein sequence ID" value="BAC36975.1"/>
    <property type="molecule type" value="mRNA"/>
</dbReference>
<dbReference type="EMBL" id="AK166431">
    <property type="protein sequence ID" value="BAE38772.1"/>
    <property type="molecule type" value="mRNA"/>
</dbReference>
<dbReference type="EMBL" id="BC010236">
    <property type="protein sequence ID" value="AAH10236.1"/>
    <property type="molecule type" value="mRNA"/>
</dbReference>
<dbReference type="CCDS" id="CCDS24561.1"/>
<dbReference type="RefSeq" id="NP_598556.1">
    <property type="nucleotide sequence ID" value="NM_133795.2"/>
</dbReference>
<dbReference type="SMR" id="Q91Z38"/>
<dbReference type="BioGRID" id="211746">
    <property type="interactions" value="28"/>
</dbReference>
<dbReference type="FunCoup" id="Q91Z38">
    <property type="interactions" value="1819"/>
</dbReference>
<dbReference type="STRING" id="10090.ENSMUSP00000040779"/>
<dbReference type="GlyGen" id="Q91Z38">
    <property type="glycosylation" value="1 site, 1 O-linked glycan (1 site)"/>
</dbReference>
<dbReference type="iPTMnet" id="Q91Z38"/>
<dbReference type="PhosphoSitePlus" id="Q91Z38"/>
<dbReference type="SwissPalm" id="Q91Z38"/>
<dbReference type="PaxDb" id="10090-ENSMUSP00000040779"/>
<dbReference type="PeptideAtlas" id="Q91Z38"/>
<dbReference type="ProteomicsDB" id="297744"/>
<dbReference type="Pumba" id="Q91Z38"/>
<dbReference type="Antibodypedia" id="28512">
    <property type="antibodies" value="174 antibodies from 27 providers"/>
</dbReference>
<dbReference type="DNASU" id="66827"/>
<dbReference type="Ensembl" id="ENSMUST00000048578.3">
    <property type="protein sequence ID" value="ENSMUSP00000040779.3"/>
    <property type="gene ID" value="ENSMUSG00000041278.11"/>
</dbReference>
<dbReference type="GeneID" id="66827"/>
<dbReference type="KEGG" id="mmu:66827"/>
<dbReference type="UCSC" id="uc007imx.1">
    <property type="organism name" value="mouse"/>
</dbReference>
<dbReference type="AGR" id="MGI:1914077"/>
<dbReference type="CTD" id="7265"/>
<dbReference type="MGI" id="MGI:1914077">
    <property type="gene designation" value="Ttc1"/>
</dbReference>
<dbReference type="VEuPathDB" id="HostDB:ENSMUSG00000041278"/>
<dbReference type="eggNOG" id="KOG4234">
    <property type="taxonomic scope" value="Eukaryota"/>
</dbReference>
<dbReference type="GeneTree" id="ENSGT00940000157213"/>
<dbReference type="HOGENOM" id="CLU_058463_3_0_1"/>
<dbReference type="InParanoid" id="Q91Z38"/>
<dbReference type="OMA" id="KSAIDDC"/>
<dbReference type="OrthoDB" id="1872379at2759"/>
<dbReference type="PhylomeDB" id="Q91Z38"/>
<dbReference type="TreeFam" id="TF317515"/>
<dbReference type="BioGRID-ORCS" id="66827">
    <property type="hits" value="26 hits in 78 CRISPR screens"/>
</dbReference>
<dbReference type="ChiTaRS" id="Ttc1">
    <property type="organism name" value="mouse"/>
</dbReference>
<dbReference type="PRO" id="PR:Q91Z38"/>
<dbReference type="Proteomes" id="UP000000589">
    <property type="component" value="Chromosome 11"/>
</dbReference>
<dbReference type="RNAct" id="Q91Z38">
    <property type="molecule type" value="protein"/>
</dbReference>
<dbReference type="Bgee" id="ENSMUSG00000041278">
    <property type="expression patterns" value="Expressed in undifferentiated genital tubercle and 262 other cell types or tissues"/>
</dbReference>
<dbReference type="ExpressionAtlas" id="Q91Z38">
    <property type="expression patterns" value="baseline and differential"/>
</dbReference>
<dbReference type="GO" id="GO:0005829">
    <property type="term" value="C:cytosol"/>
    <property type="evidence" value="ECO:0007669"/>
    <property type="project" value="Ensembl"/>
</dbReference>
<dbReference type="FunFam" id="1.25.40.10:FF:000367">
    <property type="entry name" value="Tetratricopeptide repeat domain 1"/>
    <property type="match status" value="1"/>
</dbReference>
<dbReference type="Gene3D" id="1.25.40.10">
    <property type="entry name" value="Tetratricopeptide repeat domain"/>
    <property type="match status" value="1"/>
</dbReference>
<dbReference type="InterPro" id="IPR011990">
    <property type="entry name" value="TPR-like_helical_dom_sf"/>
</dbReference>
<dbReference type="InterPro" id="IPR052769">
    <property type="entry name" value="TPR_domain_protein"/>
</dbReference>
<dbReference type="InterPro" id="IPR019734">
    <property type="entry name" value="TPR_rpt"/>
</dbReference>
<dbReference type="PANTHER" id="PTHR46014">
    <property type="entry name" value="TETRATRICOPEPTIDE REPEAT PROTEIN 1"/>
    <property type="match status" value="1"/>
</dbReference>
<dbReference type="PANTHER" id="PTHR46014:SF1">
    <property type="entry name" value="TETRATRICOPEPTIDE REPEAT PROTEIN 1"/>
    <property type="match status" value="1"/>
</dbReference>
<dbReference type="Pfam" id="PF13181">
    <property type="entry name" value="TPR_8"/>
    <property type="match status" value="1"/>
</dbReference>
<dbReference type="SMART" id="SM00028">
    <property type="entry name" value="TPR"/>
    <property type="match status" value="3"/>
</dbReference>
<dbReference type="SUPFAM" id="SSF48452">
    <property type="entry name" value="TPR-like"/>
    <property type="match status" value="1"/>
</dbReference>
<dbReference type="PROSITE" id="PS50005">
    <property type="entry name" value="TPR"/>
    <property type="match status" value="3"/>
</dbReference>
<dbReference type="PROSITE" id="PS50293">
    <property type="entry name" value="TPR_REGION"/>
    <property type="match status" value="1"/>
</dbReference>